<proteinExistence type="inferred from homology"/>
<keyword id="KW-0012">Acyltransferase</keyword>
<keyword id="KW-0963">Cytoplasm</keyword>
<keyword id="KW-0408">Iron</keyword>
<keyword id="KW-0479">Metal-binding</keyword>
<keyword id="KW-1185">Reference proteome</keyword>
<keyword id="KW-0808">Transferase</keyword>
<keyword id="KW-0819">tRNA processing</keyword>
<reference key="1">
    <citation type="journal article" date="1999" name="DNA Res.">
        <title>Complete genome sequence of an aerobic hyper-thermophilic crenarchaeon, Aeropyrum pernix K1.</title>
        <authorList>
            <person name="Kawarabayasi Y."/>
            <person name="Hino Y."/>
            <person name="Horikawa H."/>
            <person name="Yamazaki S."/>
            <person name="Haikawa Y."/>
            <person name="Jin-no K."/>
            <person name="Takahashi M."/>
            <person name="Sekine M."/>
            <person name="Baba S."/>
            <person name="Ankai A."/>
            <person name="Kosugi H."/>
            <person name="Hosoyama A."/>
            <person name="Fukui S."/>
            <person name="Nagai Y."/>
            <person name="Nishijima K."/>
            <person name="Nakazawa H."/>
            <person name="Takamiya M."/>
            <person name="Masuda S."/>
            <person name="Funahashi T."/>
            <person name="Tanaka T."/>
            <person name="Kudoh Y."/>
            <person name="Yamazaki J."/>
            <person name="Kushida N."/>
            <person name="Oguchi A."/>
            <person name="Aoki K."/>
            <person name="Kubota K."/>
            <person name="Nakamura Y."/>
            <person name="Nomura N."/>
            <person name="Sako Y."/>
            <person name="Kikuchi H."/>
        </authorList>
    </citation>
    <scope>NUCLEOTIDE SEQUENCE [LARGE SCALE GENOMIC DNA]</scope>
    <source>
        <strain>ATCC 700893 / DSM 11879 / JCM 9820 / NBRC 100138 / K1</strain>
    </source>
</reference>
<feature type="chain" id="PRO_0000303630" description="tRNA N6-adenosine threonylcarbamoyltransferase">
    <location>
        <begin position="1"/>
        <end position="349"/>
    </location>
</feature>
<feature type="binding site" evidence="1">
    <location>
        <position position="117"/>
    </location>
    <ligand>
        <name>Fe cation</name>
        <dbReference type="ChEBI" id="CHEBI:24875"/>
    </ligand>
</feature>
<feature type="binding site" evidence="1">
    <location>
        <position position="121"/>
    </location>
    <ligand>
        <name>Fe cation</name>
        <dbReference type="ChEBI" id="CHEBI:24875"/>
    </ligand>
</feature>
<feature type="binding site" evidence="1">
    <location>
        <begin position="138"/>
        <end position="142"/>
    </location>
    <ligand>
        <name>substrate</name>
    </ligand>
</feature>
<feature type="binding site" evidence="1">
    <location>
        <position position="138"/>
    </location>
    <ligand>
        <name>Fe cation</name>
        <dbReference type="ChEBI" id="CHEBI:24875"/>
    </ligand>
</feature>
<feature type="binding site" evidence="1">
    <location>
        <position position="170"/>
    </location>
    <ligand>
        <name>substrate</name>
    </ligand>
</feature>
<feature type="binding site" evidence="1">
    <location>
        <position position="191"/>
    </location>
    <ligand>
        <name>substrate</name>
    </ligand>
</feature>
<feature type="binding site" evidence="1">
    <location>
        <position position="271"/>
    </location>
    <ligand>
        <name>substrate</name>
    </ligand>
</feature>
<feature type="binding site" evidence="1">
    <location>
        <position position="299"/>
    </location>
    <ligand>
        <name>Fe cation</name>
        <dbReference type="ChEBI" id="CHEBI:24875"/>
    </ligand>
</feature>
<organism>
    <name type="scientific">Aeropyrum pernix (strain ATCC 700893 / DSM 11879 / JCM 9820 / NBRC 100138 / K1)</name>
    <dbReference type="NCBI Taxonomy" id="272557"/>
    <lineage>
        <taxon>Archaea</taxon>
        <taxon>Thermoproteota</taxon>
        <taxon>Thermoprotei</taxon>
        <taxon>Desulfurococcales</taxon>
        <taxon>Desulfurococcaceae</taxon>
        <taxon>Aeropyrum</taxon>
    </lineage>
</organism>
<dbReference type="EC" id="2.3.1.234" evidence="1"/>
<dbReference type="EMBL" id="BA000002">
    <property type="protein sequence ID" value="BAA80120.1"/>
    <property type="molecule type" value="Genomic_DNA"/>
</dbReference>
<dbReference type="PIR" id="H72714">
    <property type="entry name" value="H72714"/>
</dbReference>
<dbReference type="RefSeq" id="WP_010866185.1">
    <property type="nucleotide sequence ID" value="NC_000854.2"/>
</dbReference>
<dbReference type="SMR" id="Q9YCX7"/>
<dbReference type="STRING" id="272557.APE_1135"/>
<dbReference type="EnsemblBacteria" id="BAA80120">
    <property type="protein sequence ID" value="BAA80120"/>
    <property type="gene ID" value="APE_1135"/>
</dbReference>
<dbReference type="GeneID" id="1445807"/>
<dbReference type="KEGG" id="ape:APE_1135"/>
<dbReference type="PATRIC" id="fig|272557.25.peg.784"/>
<dbReference type="eggNOG" id="arCOG01183">
    <property type="taxonomic scope" value="Archaea"/>
</dbReference>
<dbReference type="Proteomes" id="UP000002518">
    <property type="component" value="Chromosome"/>
</dbReference>
<dbReference type="GO" id="GO:0005737">
    <property type="term" value="C:cytoplasm"/>
    <property type="evidence" value="ECO:0007669"/>
    <property type="project" value="UniProtKB-SubCell"/>
</dbReference>
<dbReference type="GO" id="GO:0000408">
    <property type="term" value="C:EKC/KEOPS complex"/>
    <property type="evidence" value="ECO:0007669"/>
    <property type="project" value="InterPro"/>
</dbReference>
<dbReference type="GO" id="GO:0005506">
    <property type="term" value="F:iron ion binding"/>
    <property type="evidence" value="ECO:0007669"/>
    <property type="project" value="UniProtKB-UniRule"/>
</dbReference>
<dbReference type="GO" id="GO:0061711">
    <property type="term" value="F:N(6)-L-threonylcarbamoyladenine synthase activity"/>
    <property type="evidence" value="ECO:0007669"/>
    <property type="project" value="UniProtKB-EC"/>
</dbReference>
<dbReference type="GO" id="GO:0002949">
    <property type="term" value="P:tRNA threonylcarbamoyladenosine modification"/>
    <property type="evidence" value="ECO:0007669"/>
    <property type="project" value="UniProtKB-UniRule"/>
</dbReference>
<dbReference type="CDD" id="cd24131">
    <property type="entry name" value="ASKHA_NBD_Kae1_arch_bac"/>
    <property type="match status" value="1"/>
</dbReference>
<dbReference type="Gene3D" id="3.30.420.40">
    <property type="match status" value="2"/>
</dbReference>
<dbReference type="HAMAP" id="MF_01446">
    <property type="entry name" value="Kae1"/>
    <property type="match status" value="1"/>
</dbReference>
<dbReference type="InterPro" id="IPR043129">
    <property type="entry name" value="ATPase_NBD"/>
</dbReference>
<dbReference type="InterPro" id="IPR000905">
    <property type="entry name" value="Gcp-like_dom"/>
</dbReference>
<dbReference type="InterPro" id="IPR017861">
    <property type="entry name" value="KAE1/TsaD"/>
</dbReference>
<dbReference type="InterPro" id="IPR034680">
    <property type="entry name" value="Kae1_archaea_euk"/>
</dbReference>
<dbReference type="InterPro" id="IPR017860">
    <property type="entry name" value="Peptidase_M22_CS"/>
</dbReference>
<dbReference type="NCBIfam" id="TIGR03722">
    <property type="entry name" value="arch_KAE1"/>
    <property type="match status" value="1"/>
</dbReference>
<dbReference type="NCBIfam" id="TIGR00329">
    <property type="entry name" value="gcp_kae1"/>
    <property type="match status" value="1"/>
</dbReference>
<dbReference type="PANTHER" id="PTHR11735">
    <property type="entry name" value="TRNA N6-ADENOSINE THREONYLCARBAMOYLTRANSFERASE"/>
    <property type="match status" value="1"/>
</dbReference>
<dbReference type="PANTHER" id="PTHR11735:SF14">
    <property type="entry name" value="TRNA N6-ADENOSINE THREONYLCARBAMOYLTRANSFERASE"/>
    <property type="match status" value="1"/>
</dbReference>
<dbReference type="Pfam" id="PF00814">
    <property type="entry name" value="TsaD"/>
    <property type="match status" value="1"/>
</dbReference>
<dbReference type="PRINTS" id="PR00789">
    <property type="entry name" value="OSIALOPTASE"/>
</dbReference>
<dbReference type="SUPFAM" id="SSF53067">
    <property type="entry name" value="Actin-like ATPase domain"/>
    <property type="match status" value="1"/>
</dbReference>
<dbReference type="PROSITE" id="PS01016">
    <property type="entry name" value="GLYCOPROTEASE"/>
    <property type="match status" value="1"/>
</dbReference>
<evidence type="ECO:0000255" key="1">
    <source>
        <dbReference type="HAMAP-Rule" id="MF_01446"/>
    </source>
</evidence>
<name>KAE1_AERPE</name>
<comment type="function">
    <text evidence="1">Required for the formation of a threonylcarbamoyl group on adenosine at position 37 (t(6)A37) in tRNAs that read codons beginning with adenine. Is probably involved in the transfer of the threonylcarbamoyl moiety of threonylcarbamoyl-AMP (TC-AMP) to the N6 group of A37.</text>
</comment>
<comment type="catalytic activity">
    <reaction evidence="1">
        <text>L-threonylcarbamoyladenylate + adenosine(37) in tRNA = N(6)-L-threonylcarbamoyladenosine(37) in tRNA + AMP + H(+)</text>
        <dbReference type="Rhea" id="RHEA:37059"/>
        <dbReference type="Rhea" id="RHEA-COMP:10162"/>
        <dbReference type="Rhea" id="RHEA-COMP:10163"/>
        <dbReference type="ChEBI" id="CHEBI:15378"/>
        <dbReference type="ChEBI" id="CHEBI:73682"/>
        <dbReference type="ChEBI" id="CHEBI:74411"/>
        <dbReference type="ChEBI" id="CHEBI:74418"/>
        <dbReference type="ChEBI" id="CHEBI:456215"/>
        <dbReference type="EC" id="2.3.1.234"/>
    </reaction>
</comment>
<comment type="cofactor">
    <cofactor evidence="1">
        <name>Fe(2+)</name>
        <dbReference type="ChEBI" id="CHEBI:29033"/>
    </cofactor>
    <text evidence="1">Binds 1 Fe(2+) ion per subunit.</text>
</comment>
<comment type="subcellular location">
    <subcellularLocation>
        <location evidence="1">Cytoplasm</location>
    </subcellularLocation>
</comment>
<comment type="similarity">
    <text evidence="1">Belongs to the KAE1 / TsaD family.</text>
</comment>
<accession>Q9YCX7</accession>
<sequence length="349" mass="36829">MPPKRDGEVLVLGIESTAHTFGVGIVSTRPPIVRADVRRRWTPREGGILPREVAEFFSLHAGEAVAEALGEAGVSIADVDAVAVALGPGMGPALRVGATVARALSAKYGKPLVPVNHAVAHVEAARFTTGLRDPVALYVAGGNTTVVSFVAGRYRTFGETLDIALGNLLDTFAREAGIAPPYVAGGLHAVDRCAEGGGFVEGIPYVVKGQDVSFSGILTAALRLLKRGARLSDVCYTLREVAFSSVVEVTERCLAHTGKRQATLTGGVAANRVLNEKMSLMAGLHGAVYRPVDVRLSGDNGVMIALTGLAAYLHGVIIDPGEAYIRQRWRIDEVDIPWYPWLPGDPPPG</sequence>
<protein>
    <recommendedName>
        <fullName evidence="1">tRNA N6-adenosine threonylcarbamoyltransferase</fullName>
        <ecNumber evidence="1">2.3.1.234</ecNumber>
    </recommendedName>
    <alternativeName>
        <fullName evidence="1">N6-L-threonylcarbamoyladenine synthase</fullName>
        <shortName evidence="1">t(6)A synthase</shortName>
    </alternativeName>
    <alternativeName>
        <fullName evidence="1">t(6)A37 threonylcarbamoyladenosine biosynthesis protein Kae1</fullName>
    </alternativeName>
    <alternativeName>
        <fullName evidence="1">tRNA threonylcarbamoyladenosine biosynthesis protein Kae1</fullName>
    </alternativeName>
</protein>
<gene>
    <name evidence="1" type="primary">kae1</name>
    <name type="ordered locus">APE_1135</name>
</gene>